<dbReference type="EC" id="3.6.5.n1" evidence="1"/>
<dbReference type="EMBL" id="CP000538">
    <property type="protein sequence ID" value="EAQ72117.1"/>
    <property type="molecule type" value="Genomic_DNA"/>
</dbReference>
<dbReference type="RefSeq" id="WP_002837927.1">
    <property type="nucleotide sequence ID" value="NC_008787.1"/>
</dbReference>
<dbReference type="SMR" id="A1W018"/>
<dbReference type="KEGG" id="cjj:CJJ81176_1049"/>
<dbReference type="eggNOG" id="COG0481">
    <property type="taxonomic scope" value="Bacteria"/>
</dbReference>
<dbReference type="HOGENOM" id="CLU_009995_3_3_7"/>
<dbReference type="Proteomes" id="UP000000646">
    <property type="component" value="Chromosome"/>
</dbReference>
<dbReference type="GO" id="GO:0005886">
    <property type="term" value="C:plasma membrane"/>
    <property type="evidence" value="ECO:0007669"/>
    <property type="project" value="UniProtKB-SubCell"/>
</dbReference>
<dbReference type="GO" id="GO:0005525">
    <property type="term" value="F:GTP binding"/>
    <property type="evidence" value="ECO:0007669"/>
    <property type="project" value="UniProtKB-UniRule"/>
</dbReference>
<dbReference type="GO" id="GO:0003924">
    <property type="term" value="F:GTPase activity"/>
    <property type="evidence" value="ECO:0007669"/>
    <property type="project" value="UniProtKB-UniRule"/>
</dbReference>
<dbReference type="GO" id="GO:0043022">
    <property type="term" value="F:ribosome binding"/>
    <property type="evidence" value="ECO:0007669"/>
    <property type="project" value="UniProtKB-UniRule"/>
</dbReference>
<dbReference type="GO" id="GO:0003746">
    <property type="term" value="F:translation elongation factor activity"/>
    <property type="evidence" value="ECO:0007669"/>
    <property type="project" value="UniProtKB-UniRule"/>
</dbReference>
<dbReference type="GO" id="GO:0045727">
    <property type="term" value="P:positive regulation of translation"/>
    <property type="evidence" value="ECO:0007669"/>
    <property type="project" value="UniProtKB-UniRule"/>
</dbReference>
<dbReference type="CDD" id="cd16260">
    <property type="entry name" value="EF4_III"/>
    <property type="match status" value="1"/>
</dbReference>
<dbReference type="CDD" id="cd01890">
    <property type="entry name" value="LepA"/>
    <property type="match status" value="1"/>
</dbReference>
<dbReference type="CDD" id="cd03709">
    <property type="entry name" value="lepA_C"/>
    <property type="match status" value="1"/>
</dbReference>
<dbReference type="FunFam" id="3.40.50.300:FF:000078">
    <property type="entry name" value="Elongation factor 4"/>
    <property type="match status" value="1"/>
</dbReference>
<dbReference type="FunFam" id="2.40.30.10:FF:000015">
    <property type="entry name" value="Translation factor GUF1, mitochondrial"/>
    <property type="match status" value="1"/>
</dbReference>
<dbReference type="FunFam" id="3.30.70.240:FF:000007">
    <property type="entry name" value="Translation factor GUF1, mitochondrial"/>
    <property type="match status" value="1"/>
</dbReference>
<dbReference type="FunFam" id="3.30.70.2570:FF:000001">
    <property type="entry name" value="Translation factor GUF1, mitochondrial"/>
    <property type="match status" value="1"/>
</dbReference>
<dbReference type="FunFam" id="3.30.70.870:FF:000004">
    <property type="entry name" value="Translation factor GUF1, mitochondrial"/>
    <property type="match status" value="1"/>
</dbReference>
<dbReference type="Gene3D" id="3.30.70.240">
    <property type="match status" value="1"/>
</dbReference>
<dbReference type="Gene3D" id="3.30.70.2570">
    <property type="entry name" value="Elongation factor 4, C-terminal domain"/>
    <property type="match status" value="1"/>
</dbReference>
<dbReference type="Gene3D" id="3.30.70.870">
    <property type="entry name" value="Elongation Factor G (Translational Gtpase), domain 3"/>
    <property type="match status" value="1"/>
</dbReference>
<dbReference type="Gene3D" id="3.40.50.300">
    <property type="entry name" value="P-loop containing nucleotide triphosphate hydrolases"/>
    <property type="match status" value="1"/>
</dbReference>
<dbReference type="Gene3D" id="2.40.30.10">
    <property type="entry name" value="Translation factors"/>
    <property type="match status" value="1"/>
</dbReference>
<dbReference type="HAMAP" id="MF_00071">
    <property type="entry name" value="LepA"/>
    <property type="match status" value="1"/>
</dbReference>
<dbReference type="InterPro" id="IPR006297">
    <property type="entry name" value="EF-4"/>
</dbReference>
<dbReference type="InterPro" id="IPR035647">
    <property type="entry name" value="EFG_III/V"/>
</dbReference>
<dbReference type="InterPro" id="IPR000640">
    <property type="entry name" value="EFG_V-like"/>
</dbReference>
<dbReference type="InterPro" id="IPR004161">
    <property type="entry name" value="EFTu-like_2"/>
</dbReference>
<dbReference type="InterPro" id="IPR031157">
    <property type="entry name" value="G_TR_CS"/>
</dbReference>
<dbReference type="InterPro" id="IPR038363">
    <property type="entry name" value="LepA_C_sf"/>
</dbReference>
<dbReference type="InterPro" id="IPR013842">
    <property type="entry name" value="LepA_CTD"/>
</dbReference>
<dbReference type="InterPro" id="IPR035654">
    <property type="entry name" value="LepA_IV"/>
</dbReference>
<dbReference type="InterPro" id="IPR027417">
    <property type="entry name" value="P-loop_NTPase"/>
</dbReference>
<dbReference type="InterPro" id="IPR005225">
    <property type="entry name" value="Small_GTP-bd"/>
</dbReference>
<dbReference type="InterPro" id="IPR000795">
    <property type="entry name" value="T_Tr_GTP-bd_dom"/>
</dbReference>
<dbReference type="InterPro" id="IPR009000">
    <property type="entry name" value="Transl_B-barrel_sf"/>
</dbReference>
<dbReference type="NCBIfam" id="TIGR01393">
    <property type="entry name" value="lepA"/>
    <property type="match status" value="1"/>
</dbReference>
<dbReference type="NCBIfam" id="TIGR00231">
    <property type="entry name" value="small_GTP"/>
    <property type="match status" value="1"/>
</dbReference>
<dbReference type="PANTHER" id="PTHR43512:SF4">
    <property type="entry name" value="TRANSLATION FACTOR GUF1 HOMOLOG, CHLOROPLASTIC"/>
    <property type="match status" value="1"/>
</dbReference>
<dbReference type="PANTHER" id="PTHR43512">
    <property type="entry name" value="TRANSLATION FACTOR GUF1-RELATED"/>
    <property type="match status" value="1"/>
</dbReference>
<dbReference type="Pfam" id="PF00679">
    <property type="entry name" value="EFG_C"/>
    <property type="match status" value="1"/>
</dbReference>
<dbReference type="Pfam" id="PF00009">
    <property type="entry name" value="GTP_EFTU"/>
    <property type="match status" value="1"/>
</dbReference>
<dbReference type="Pfam" id="PF03144">
    <property type="entry name" value="GTP_EFTU_D2"/>
    <property type="match status" value="1"/>
</dbReference>
<dbReference type="Pfam" id="PF06421">
    <property type="entry name" value="LepA_C"/>
    <property type="match status" value="1"/>
</dbReference>
<dbReference type="PRINTS" id="PR00315">
    <property type="entry name" value="ELONGATNFCT"/>
</dbReference>
<dbReference type="SMART" id="SM00838">
    <property type="entry name" value="EFG_C"/>
    <property type="match status" value="1"/>
</dbReference>
<dbReference type="SUPFAM" id="SSF54980">
    <property type="entry name" value="EF-G C-terminal domain-like"/>
    <property type="match status" value="2"/>
</dbReference>
<dbReference type="SUPFAM" id="SSF52540">
    <property type="entry name" value="P-loop containing nucleoside triphosphate hydrolases"/>
    <property type="match status" value="1"/>
</dbReference>
<dbReference type="SUPFAM" id="SSF50447">
    <property type="entry name" value="Translation proteins"/>
    <property type="match status" value="1"/>
</dbReference>
<dbReference type="PROSITE" id="PS00301">
    <property type="entry name" value="G_TR_1"/>
    <property type="match status" value="1"/>
</dbReference>
<dbReference type="PROSITE" id="PS51722">
    <property type="entry name" value="G_TR_2"/>
    <property type="match status" value="1"/>
</dbReference>
<accession>A1W018</accession>
<sequence length="598" mass="66544">MSVKNIRNFSIIAHIDHGKSTLADRIISECGAISDRQMSSQVMDTMDIEKERGITIKAQSVRLNYKFNNENFVLNLIDTPGHVDFSYEVSRSLASCEGALLVVDASQGVEAQTIANVYIALENNLEIIPVINKIDLPNADVEKVKHEIEHIIGIDCKDAICVSAKTGVGIKELIETIITKIPAPKTDDEAPTKALIYDSWFDNYLGALALVRIYEGSIAKNDEVLVMSTDKKHIVQDLFYPHPLSPIKTQSLQSGEVGVVVLGLKTVGDVQVGDTITLVKNKAKEAIGGFEKAKAFVFAGLYPIETDKFEDLRDALDKLKLNDSSITYEPETSLALGFGFRVGFLGLLHMEVIKERLEREFNLDLIATAPTVTYEIYQTDGELIKIQNPSELPPVNKIDHIKEPYVKATIITPSEFLGNLITLLNRKRGVQVKMDYITPERVLLEYDVPLNEIVMDFYDKLKSLTKGYASFDYEPIEFRVGDLVKLDIKVAGENVDALSIIVPNEKAQSKGRELVSAMKEIVPRQLFEVAIQASIGNKIIARETVKSMGKNVTAKCYGGDITRKRKLLEKQKEGKKRMKAIGKVNLPQEAFLSVLKID</sequence>
<feature type="chain" id="PRO_1000031984" description="Elongation factor 4">
    <location>
        <begin position="1"/>
        <end position="598"/>
    </location>
</feature>
<feature type="domain" description="tr-type G">
    <location>
        <begin position="4"/>
        <end position="185"/>
    </location>
</feature>
<feature type="binding site" evidence="1">
    <location>
        <begin position="16"/>
        <end position="21"/>
    </location>
    <ligand>
        <name>GTP</name>
        <dbReference type="ChEBI" id="CHEBI:37565"/>
    </ligand>
</feature>
<feature type="binding site" evidence="1">
    <location>
        <begin position="132"/>
        <end position="135"/>
    </location>
    <ligand>
        <name>GTP</name>
        <dbReference type="ChEBI" id="CHEBI:37565"/>
    </ligand>
</feature>
<name>LEPA_CAMJJ</name>
<proteinExistence type="inferred from homology"/>
<comment type="function">
    <text evidence="1">Required for accurate and efficient protein synthesis under certain stress conditions. May act as a fidelity factor of the translation reaction, by catalyzing a one-codon backward translocation of tRNAs on improperly translocated ribosomes. Back-translocation proceeds from a post-translocation (POST) complex to a pre-translocation (PRE) complex, thus giving elongation factor G a second chance to translocate the tRNAs correctly. Binds to ribosomes in a GTP-dependent manner.</text>
</comment>
<comment type="catalytic activity">
    <reaction evidence="1">
        <text>GTP + H2O = GDP + phosphate + H(+)</text>
        <dbReference type="Rhea" id="RHEA:19669"/>
        <dbReference type="ChEBI" id="CHEBI:15377"/>
        <dbReference type="ChEBI" id="CHEBI:15378"/>
        <dbReference type="ChEBI" id="CHEBI:37565"/>
        <dbReference type="ChEBI" id="CHEBI:43474"/>
        <dbReference type="ChEBI" id="CHEBI:58189"/>
        <dbReference type="EC" id="3.6.5.n1"/>
    </reaction>
</comment>
<comment type="subcellular location">
    <subcellularLocation>
        <location evidence="1">Cell inner membrane</location>
        <topology evidence="1">Peripheral membrane protein</topology>
        <orientation evidence="1">Cytoplasmic side</orientation>
    </subcellularLocation>
</comment>
<comment type="similarity">
    <text evidence="1">Belongs to the TRAFAC class translation factor GTPase superfamily. Classic translation factor GTPase family. LepA subfamily.</text>
</comment>
<organism>
    <name type="scientific">Campylobacter jejuni subsp. jejuni serotype O:23/36 (strain 81-176)</name>
    <dbReference type="NCBI Taxonomy" id="354242"/>
    <lineage>
        <taxon>Bacteria</taxon>
        <taxon>Pseudomonadati</taxon>
        <taxon>Campylobacterota</taxon>
        <taxon>Epsilonproteobacteria</taxon>
        <taxon>Campylobacterales</taxon>
        <taxon>Campylobacteraceae</taxon>
        <taxon>Campylobacter</taxon>
    </lineage>
</organism>
<reference key="1">
    <citation type="submission" date="2006-12" db="EMBL/GenBank/DDBJ databases">
        <authorList>
            <person name="Fouts D.E."/>
            <person name="Nelson K.E."/>
            <person name="Sebastian Y."/>
        </authorList>
    </citation>
    <scope>NUCLEOTIDE SEQUENCE [LARGE SCALE GENOMIC DNA]</scope>
    <source>
        <strain>81-176</strain>
    </source>
</reference>
<keyword id="KW-0997">Cell inner membrane</keyword>
<keyword id="KW-1003">Cell membrane</keyword>
<keyword id="KW-0342">GTP-binding</keyword>
<keyword id="KW-0378">Hydrolase</keyword>
<keyword id="KW-0472">Membrane</keyword>
<keyword id="KW-0547">Nucleotide-binding</keyword>
<keyword id="KW-0648">Protein biosynthesis</keyword>
<gene>
    <name evidence="1" type="primary">lepA</name>
    <name type="ordered locus">CJJ81176_1049</name>
</gene>
<protein>
    <recommendedName>
        <fullName evidence="1">Elongation factor 4</fullName>
        <shortName evidence="1">EF-4</shortName>
        <ecNumber evidence="1">3.6.5.n1</ecNumber>
    </recommendedName>
    <alternativeName>
        <fullName evidence="1">Ribosomal back-translocase LepA</fullName>
    </alternativeName>
</protein>
<evidence type="ECO:0000255" key="1">
    <source>
        <dbReference type="HAMAP-Rule" id="MF_00071"/>
    </source>
</evidence>